<gene>
    <name type="primary">GSNAP</name>
    <name type="ordered locus">At4g20410</name>
    <name type="ORF">F9F13.60</name>
</gene>
<keyword id="KW-0931">ER-Golgi transport</keyword>
<keyword id="KW-0472">Membrane</keyword>
<keyword id="KW-0653">Protein transport</keyword>
<keyword id="KW-1185">Reference proteome</keyword>
<keyword id="KW-0813">Transport</keyword>
<dbReference type="EMBL" id="AF177990">
    <property type="protein sequence ID" value="AAF01285.1"/>
    <property type="molecule type" value="mRNA"/>
</dbReference>
<dbReference type="EMBL" id="AL080253">
    <property type="protein sequence ID" value="CAB45807.1"/>
    <property type="status" value="ALT_SEQ"/>
    <property type="molecule type" value="Genomic_DNA"/>
</dbReference>
<dbReference type="EMBL" id="AL161553">
    <property type="protein sequence ID" value="CAB79041.1"/>
    <property type="status" value="ALT_SEQ"/>
    <property type="molecule type" value="Genomic_DNA"/>
</dbReference>
<dbReference type="EMBL" id="CP002687">
    <property type="protein sequence ID" value="AEE84326.1"/>
    <property type="molecule type" value="Genomic_DNA"/>
</dbReference>
<dbReference type="EMBL" id="AY086673">
    <property type="protein sequence ID" value="AAM63730.1"/>
    <property type="molecule type" value="mRNA"/>
</dbReference>
<dbReference type="RefSeq" id="NP_567600.1">
    <property type="nucleotide sequence ID" value="NM_118160.5"/>
</dbReference>
<dbReference type="SMR" id="Q9SPE5"/>
<dbReference type="BioGRID" id="13080">
    <property type="interactions" value="2"/>
</dbReference>
<dbReference type="FunCoup" id="Q9SPE5">
    <property type="interactions" value="3670"/>
</dbReference>
<dbReference type="STRING" id="3702.Q9SPE5"/>
<dbReference type="PaxDb" id="3702-AT4G20410.1"/>
<dbReference type="ProteomicsDB" id="245321"/>
<dbReference type="DNASU" id="827789"/>
<dbReference type="EnsemblPlants" id="AT4G20410.1">
    <property type="protein sequence ID" value="AT4G20410.1"/>
    <property type="gene ID" value="AT4G20410"/>
</dbReference>
<dbReference type="GeneID" id="827789"/>
<dbReference type="Gramene" id="AT4G20410.1">
    <property type="protein sequence ID" value="AT4G20410.1"/>
    <property type="gene ID" value="AT4G20410"/>
</dbReference>
<dbReference type="KEGG" id="ath:AT4G20410"/>
<dbReference type="Araport" id="AT4G20410"/>
<dbReference type="TAIR" id="AT4G20410">
    <property type="gene designation" value="GSNAP"/>
</dbReference>
<dbReference type="eggNOG" id="KOG1585">
    <property type="taxonomic scope" value="Eukaryota"/>
</dbReference>
<dbReference type="HOGENOM" id="CLU_063974_2_0_1"/>
<dbReference type="InParanoid" id="Q9SPE5"/>
<dbReference type="OMA" id="RSWFHAA"/>
<dbReference type="PhylomeDB" id="Q9SPE5"/>
<dbReference type="PRO" id="PR:Q9SPE5"/>
<dbReference type="Proteomes" id="UP000006548">
    <property type="component" value="Chromosome 4"/>
</dbReference>
<dbReference type="ExpressionAtlas" id="Q9SPE5">
    <property type="expression patterns" value="baseline and differential"/>
</dbReference>
<dbReference type="GO" id="GO:0005829">
    <property type="term" value="C:cytosol"/>
    <property type="evidence" value="ECO:0007005"/>
    <property type="project" value="TAIR"/>
</dbReference>
<dbReference type="GO" id="GO:0016020">
    <property type="term" value="C:membrane"/>
    <property type="evidence" value="ECO:0007669"/>
    <property type="project" value="UniProtKB-SubCell"/>
</dbReference>
<dbReference type="GO" id="GO:0006886">
    <property type="term" value="P:intracellular protein transport"/>
    <property type="evidence" value="ECO:0007669"/>
    <property type="project" value="InterPro"/>
</dbReference>
<dbReference type="GO" id="GO:0016192">
    <property type="term" value="P:vesicle-mediated transport"/>
    <property type="evidence" value="ECO:0007669"/>
    <property type="project" value="UniProtKB-KW"/>
</dbReference>
<dbReference type="CDD" id="cd15832">
    <property type="entry name" value="SNAP"/>
    <property type="match status" value="1"/>
</dbReference>
<dbReference type="FunFam" id="1.25.40.10:FF:000323">
    <property type="entry name" value="Gamma-soluble NSF attachment protein"/>
    <property type="match status" value="1"/>
</dbReference>
<dbReference type="Gene3D" id="1.25.40.10">
    <property type="entry name" value="Tetratricopeptide repeat domain"/>
    <property type="match status" value="1"/>
</dbReference>
<dbReference type="InterPro" id="IPR000744">
    <property type="entry name" value="NSF_attach"/>
</dbReference>
<dbReference type="InterPro" id="IPR011990">
    <property type="entry name" value="TPR-like_helical_dom_sf"/>
</dbReference>
<dbReference type="PANTHER" id="PTHR13768:SF2">
    <property type="entry name" value="GAMMA-SOLUBLE NSF ATTACHMENT PROTEIN"/>
    <property type="match status" value="1"/>
</dbReference>
<dbReference type="PANTHER" id="PTHR13768">
    <property type="entry name" value="SOLUBLE NSF ATTACHMENT PROTEIN SNAP"/>
    <property type="match status" value="1"/>
</dbReference>
<dbReference type="Pfam" id="PF14938">
    <property type="entry name" value="SNAP"/>
    <property type="match status" value="1"/>
</dbReference>
<dbReference type="SUPFAM" id="SSF48452">
    <property type="entry name" value="TPR-like"/>
    <property type="match status" value="1"/>
</dbReference>
<evidence type="ECO:0000250" key="1"/>
<evidence type="ECO:0000305" key="2"/>
<comment type="function">
    <text evidence="1">Required for vesicular transport between the endoplasmic reticulum and the Golgi apparatus. Binds to SNARE complex and then recruits NSF to disassemble it (By similarity).</text>
</comment>
<comment type="subcellular location">
    <subcellularLocation>
        <location evidence="1">Membrane</location>
        <topology evidence="1">Peripheral membrane protein</topology>
    </subcellularLocation>
</comment>
<comment type="similarity">
    <text evidence="2">Belongs to the SNAP family.</text>
</comment>
<comment type="sequence caution" evidence="2">
    <conflict type="erroneous gene model prediction">
        <sequence resource="EMBL-CDS" id="CAB45807"/>
    </conflict>
</comment>
<comment type="sequence caution" evidence="2">
    <conflict type="erroneous gene model prediction">
        <sequence resource="EMBL-CDS" id="CAB79041"/>
    </conflict>
</comment>
<reference key="1">
    <citation type="journal article" date="2000" name="Eur. J. Biochem.">
        <title>Functional and molecular identification of novel members of the ubiquitous membrane fusion proteins alpha- and gamma-SNAP (soluble N-ethylmaleimide-sensitive factor-attachment proteins) families in Dictyostelium discoideum.</title>
        <authorList>
            <person name="Weidenhaupt M."/>
            <person name="Bruckert F."/>
            <person name="Louwagie M."/>
            <person name="Garin J."/>
            <person name="Satre M."/>
        </authorList>
    </citation>
    <scope>NUCLEOTIDE SEQUENCE</scope>
    <source>
        <strain>cv. Columbia</strain>
    </source>
</reference>
<reference key="2">
    <citation type="journal article" date="1999" name="Nature">
        <title>Sequence and analysis of chromosome 4 of the plant Arabidopsis thaliana.</title>
        <authorList>
            <person name="Mayer K.F.X."/>
            <person name="Schueller C."/>
            <person name="Wambutt R."/>
            <person name="Murphy G."/>
            <person name="Volckaert G."/>
            <person name="Pohl T."/>
            <person name="Duesterhoeft A."/>
            <person name="Stiekema W."/>
            <person name="Entian K.-D."/>
            <person name="Terryn N."/>
            <person name="Harris B."/>
            <person name="Ansorge W."/>
            <person name="Brandt P."/>
            <person name="Grivell L.A."/>
            <person name="Rieger M."/>
            <person name="Weichselgartner M."/>
            <person name="de Simone V."/>
            <person name="Obermaier B."/>
            <person name="Mache R."/>
            <person name="Mueller M."/>
            <person name="Kreis M."/>
            <person name="Delseny M."/>
            <person name="Puigdomenech P."/>
            <person name="Watson M."/>
            <person name="Schmidtheini T."/>
            <person name="Reichert B."/>
            <person name="Portetelle D."/>
            <person name="Perez-Alonso M."/>
            <person name="Boutry M."/>
            <person name="Bancroft I."/>
            <person name="Vos P."/>
            <person name="Hoheisel J."/>
            <person name="Zimmermann W."/>
            <person name="Wedler H."/>
            <person name="Ridley P."/>
            <person name="Langham S.-A."/>
            <person name="McCullagh B."/>
            <person name="Bilham L."/>
            <person name="Robben J."/>
            <person name="van der Schueren J."/>
            <person name="Grymonprez B."/>
            <person name="Chuang Y.-J."/>
            <person name="Vandenbussche F."/>
            <person name="Braeken M."/>
            <person name="Weltjens I."/>
            <person name="Voet M."/>
            <person name="Bastiaens I."/>
            <person name="Aert R."/>
            <person name="Defoor E."/>
            <person name="Weitzenegger T."/>
            <person name="Bothe G."/>
            <person name="Ramsperger U."/>
            <person name="Hilbert H."/>
            <person name="Braun M."/>
            <person name="Holzer E."/>
            <person name="Brandt A."/>
            <person name="Peters S."/>
            <person name="van Staveren M."/>
            <person name="Dirkse W."/>
            <person name="Mooijman P."/>
            <person name="Klein Lankhorst R."/>
            <person name="Rose M."/>
            <person name="Hauf J."/>
            <person name="Koetter P."/>
            <person name="Berneiser S."/>
            <person name="Hempel S."/>
            <person name="Feldpausch M."/>
            <person name="Lamberth S."/>
            <person name="Van den Daele H."/>
            <person name="De Keyser A."/>
            <person name="Buysshaert C."/>
            <person name="Gielen J."/>
            <person name="Villarroel R."/>
            <person name="De Clercq R."/>
            <person name="van Montagu M."/>
            <person name="Rogers J."/>
            <person name="Cronin A."/>
            <person name="Quail M.A."/>
            <person name="Bray-Allen S."/>
            <person name="Clark L."/>
            <person name="Doggett J."/>
            <person name="Hall S."/>
            <person name="Kay M."/>
            <person name="Lennard N."/>
            <person name="McLay K."/>
            <person name="Mayes R."/>
            <person name="Pettett A."/>
            <person name="Rajandream M.A."/>
            <person name="Lyne M."/>
            <person name="Benes V."/>
            <person name="Rechmann S."/>
            <person name="Borkova D."/>
            <person name="Bloecker H."/>
            <person name="Scharfe M."/>
            <person name="Grimm M."/>
            <person name="Loehnert T.-H."/>
            <person name="Dose S."/>
            <person name="de Haan M."/>
            <person name="Maarse A.C."/>
            <person name="Schaefer M."/>
            <person name="Mueller-Auer S."/>
            <person name="Gabel C."/>
            <person name="Fuchs M."/>
            <person name="Fartmann B."/>
            <person name="Granderath K."/>
            <person name="Dauner D."/>
            <person name="Herzl A."/>
            <person name="Neumann S."/>
            <person name="Argiriou A."/>
            <person name="Vitale D."/>
            <person name="Liguori R."/>
            <person name="Piravandi E."/>
            <person name="Massenet O."/>
            <person name="Quigley F."/>
            <person name="Clabauld G."/>
            <person name="Muendlein A."/>
            <person name="Felber R."/>
            <person name="Schnabl S."/>
            <person name="Hiller R."/>
            <person name="Schmidt W."/>
            <person name="Lecharny A."/>
            <person name="Aubourg S."/>
            <person name="Chefdor F."/>
            <person name="Cooke R."/>
            <person name="Berger C."/>
            <person name="Monfort A."/>
            <person name="Casacuberta E."/>
            <person name="Gibbons T."/>
            <person name="Weber N."/>
            <person name="Vandenbol M."/>
            <person name="Bargues M."/>
            <person name="Terol J."/>
            <person name="Torres A."/>
            <person name="Perez-Perez A."/>
            <person name="Purnelle B."/>
            <person name="Bent E."/>
            <person name="Johnson S."/>
            <person name="Tacon D."/>
            <person name="Jesse T."/>
            <person name="Heijnen L."/>
            <person name="Schwarz S."/>
            <person name="Scholler P."/>
            <person name="Heber S."/>
            <person name="Francs P."/>
            <person name="Bielke C."/>
            <person name="Frishman D."/>
            <person name="Haase D."/>
            <person name="Lemcke K."/>
            <person name="Mewes H.-W."/>
            <person name="Stocker S."/>
            <person name="Zaccaria P."/>
            <person name="Bevan M."/>
            <person name="Wilson R.K."/>
            <person name="de la Bastide M."/>
            <person name="Habermann K."/>
            <person name="Parnell L."/>
            <person name="Dedhia N."/>
            <person name="Gnoj L."/>
            <person name="Schutz K."/>
            <person name="Huang E."/>
            <person name="Spiegel L."/>
            <person name="Sekhon M."/>
            <person name="Murray J."/>
            <person name="Sheet P."/>
            <person name="Cordes M."/>
            <person name="Abu-Threideh J."/>
            <person name="Stoneking T."/>
            <person name="Kalicki J."/>
            <person name="Graves T."/>
            <person name="Harmon G."/>
            <person name="Edwards J."/>
            <person name="Latreille P."/>
            <person name="Courtney L."/>
            <person name="Cloud J."/>
            <person name="Abbott A."/>
            <person name="Scott K."/>
            <person name="Johnson D."/>
            <person name="Minx P."/>
            <person name="Bentley D."/>
            <person name="Fulton B."/>
            <person name="Miller N."/>
            <person name="Greco T."/>
            <person name="Kemp K."/>
            <person name="Kramer J."/>
            <person name="Fulton L."/>
            <person name="Mardis E."/>
            <person name="Dante M."/>
            <person name="Pepin K."/>
            <person name="Hillier L.W."/>
            <person name="Nelson J."/>
            <person name="Spieth J."/>
            <person name="Ryan E."/>
            <person name="Andrews S."/>
            <person name="Geisel C."/>
            <person name="Layman D."/>
            <person name="Du H."/>
            <person name="Ali J."/>
            <person name="Berghoff A."/>
            <person name="Jones K."/>
            <person name="Drone K."/>
            <person name="Cotton M."/>
            <person name="Joshu C."/>
            <person name="Antonoiu B."/>
            <person name="Zidanic M."/>
            <person name="Strong C."/>
            <person name="Sun H."/>
            <person name="Lamar B."/>
            <person name="Yordan C."/>
            <person name="Ma P."/>
            <person name="Zhong J."/>
            <person name="Preston R."/>
            <person name="Vil D."/>
            <person name="Shekher M."/>
            <person name="Matero A."/>
            <person name="Shah R."/>
            <person name="Swaby I.K."/>
            <person name="O'Shaughnessy A."/>
            <person name="Rodriguez M."/>
            <person name="Hoffman J."/>
            <person name="Till S."/>
            <person name="Granat S."/>
            <person name="Shohdy N."/>
            <person name="Hasegawa A."/>
            <person name="Hameed A."/>
            <person name="Lodhi M."/>
            <person name="Johnson A."/>
            <person name="Chen E."/>
            <person name="Marra M.A."/>
            <person name="Martienssen R."/>
            <person name="McCombie W.R."/>
        </authorList>
    </citation>
    <scope>NUCLEOTIDE SEQUENCE [LARGE SCALE GENOMIC DNA]</scope>
    <source>
        <strain>cv. Columbia</strain>
    </source>
</reference>
<reference key="3">
    <citation type="journal article" date="2017" name="Plant J.">
        <title>Araport11: a complete reannotation of the Arabidopsis thaliana reference genome.</title>
        <authorList>
            <person name="Cheng C.Y."/>
            <person name="Krishnakumar V."/>
            <person name="Chan A.P."/>
            <person name="Thibaud-Nissen F."/>
            <person name="Schobel S."/>
            <person name="Town C.D."/>
        </authorList>
    </citation>
    <scope>GENOME REANNOTATION</scope>
    <source>
        <strain>cv. Columbia</strain>
    </source>
</reference>
<reference key="4">
    <citation type="submission" date="2002-03" db="EMBL/GenBank/DDBJ databases">
        <title>Full-length cDNA from Arabidopsis thaliana.</title>
        <authorList>
            <person name="Brover V.V."/>
            <person name="Troukhan M.E."/>
            <person name="Alexandrov N.A."/>
            <person name="Lu Y.-P."/>
            <person name="Flavell R.B."/>
            <person name="Feldmann K.A."/>
        </authorList>
    </citation>
    <scope>NUCLEOTIDE SEQUENCE [LARGE SCALE MRNA]</scope>
</reference>
<proteinExistence type="evidence at transcript level"/>
<name>SNAG_ARATH</name>
<sequence length="291" mass="32360">MSSDPDKMMSKADKMTKLTLTRWSADWRGATELYEQAANGFRASNKYEKAKVALEKASKGQEMQASPWDAAKHMESAAALAQKLSIWNEVADFYRKASELYVECGRAQPASDALGKAARALEDVKPDDAIQLYTDACEILEEDGRDQMAFDLYRACANVYIKLEKFTDAATFFLRLGVAADKCDATNSQCKAYLSAIILYLYAHDLQQAEKCYNDCSQIDAFLKSDQSRSASRLLTAYNEGDIEEIKKVASASTVSNLDHMIIKLARKLPTGDVTAIQMNTNDDLDEDDLT</sequence>
<organism>
    <name type="scientific">Arabidopsis thaliana</name>
    <name type="common">Mouse-ear cress</name>
    <dbReference type="NCBI Taxonomy" id="3702"/>
    <lineage>
        <taxon>Eukaryota</taxon>
        <taxon>Viridiplantae</taxon>
        <taxon>Streptophyta</taxon>
        <taxon>Embryophyta</taxon>
        <taxon>Tracheophyta</taxon>
        <taxon>Spermatophyta</taxon>
        <taxon>Magnoliopsida</taxon>
        <taxon>eudicotyledons</taxon>
        <taxon>Gunneridae</taxon>
        <taxon>Pentapetalae</taxon>
        <taxon>rosids</taxon>
        <taxon>malvids</taxon>
        <taxon>Brassicales</taxon>
        <taxon>Brassicaceae</taxon>
        <taxon>Camelineae</taxon>
        <taxon>Arabidopsis</taxon>
    </lineage>
</organism>
<accession>Q9SPE5</accession>
<accession>Q9SUN8</accession>
<protein>
    <recommendedName>
        <fullName>Gamma-soluble NSF attachment protein</fullName>
        <shortName>Gamma-SNAP</shortName>
    </recommendedName>
    <alternativeName>
        <fullName>N-ethylmaleimide-sensitive factor attachment protein gamma</fullName>
    </alternativeName>
</protein>
<feature type="chain" id="PRO_0000219070" description="Gamma-soluble NSF attachment protein">
    <location>
        <begin position="1"/>
        <end position="291"/>
    </location>
</feature>
<feature type="sequence conflict" description="In Ref. 4; AAM63730." evidence="2" ref="4">
    <original>NK</original>
    <variation>KN</variation>
    <location>
        <begin position="45"/>
        <end position="46"/>
    </location>
</feature>
<feature type="sequence conflict" description="In Ref. 4; AAM63730." evidence="2" ref="4">
    <original>A</original>
    <variation>S</variation>
    <location>
        <position position="129"/>
    </location>
</feature>